<evidence type="ECO:0000255" key="1">
    <source>
        <dbReference type="HAMAP-Rule" id="MF_00286"/>
    </source>
</evidence>
<evidence type="ECO:0000305" key="2"/>
<sequence length="175" mass="19672">MTALTRFAHSRSSWFLLTGTAIGLEAAALYFQYVMKLDPCVMCIYQRLAVFGILVAGLIGMTAPKYRLIRILGASCWAVSATWGLKLALALVNMQNNPSPFATCSFLPEFPTWMPLHEWFPAVMLPTGMCTDLPWRFMDVTMAEWMVVVFSTFLVIWLLFIVPILSGSTKPSLYK</sequence>
<gene>
    <name evidence="1" type="primary">dsbB</name>
    <name type="ordered locus">Sputw3181_2344</name>
</gene>
<keyword id="KW-0997">Cell inner membrane</keyword>
<keyword id="KW-1003">Cell membrane</keyword>
<keyword id="KW-0143">Chaperone</keyword>
<keyword id="KW-1015">Disulfide bond</keyword>
<keyword id="KW-0249">Electron transport</keyword>
<keyword id="KW-0472">Membrane</keyword>
<keyword id="KW-0560">Oxidoreductase</keyword>
<keyword id="KW-0676">Redox-active center</keyword>
<keyword id="KW-0812">Transmembrane</keyword>
<keyword id="KW-1133">Transmembrane helix</keyword>
<keyword id="KW-0813">Transport</keyword>
<feature type="chain" id="PRO_0000298413" description="Disulfide bond formation protein B">
    <location>
        <begin position="1"/>
        <end position="175"/>
    </location>
</feature>
<feature type="topological domain" description="Cytoplasmic" evidence="1">
    <location>
        <begin position="1"/>
        <end position="13"/>
    </location>
</feature>
<feature type="transmembrane region" description="Helical" evidence="1">
    <location>
        <begin position="14"/>
        <end position="30"/>
    </location>
</feature>
<feature type="topological domain" description="Periplasmic" evidence="1">
    <location>
        <begin position="31"/>
        <end position="48"/>
    </location>
</feature>
<feature type="transmembrane region" description="Helical" evidence="1">
    <location>
        <begin position="49"/>
        <end position="64"/>
    </location>
</feature>
<feature type="topological domain" description="Cytoplasmic" evidence="1">
    <location>
        <begin position="65"/>
        <end position="71"/>
    </location>
</feature>
<feature type="transmembrane region" description="Helical" evidence="1">
    <location>
        <begin position="72"/>
        <end position="89"/>
    </location>
</feature>
<feature type="topological domain" description="Periplasmic" evidence="1">
    <location>
        <begin position="90"/>
        <end position="144"/>
    </location>
</feature>
<feature type="transmembrane region" description="Helical" evidence="1">
    <location>
        <begin position="145"/>
        <end position="163"/>
    </location>
</feature>
<feature type="topological domain" description="Cytoplasmic" evidence="1">
    <location>
        <begin position="164"/>
        <end position="175"/>
    </location>
</feature>
<feature type="disulfide bond" description="Redox-active" evidence="1">
    <location>
        <begin position="40"/>
        <end position="43"/>
    </location>
</feature>
<feature type="disulfide bond" description="Redox-active" evidence="1">
    <location>
        <begin position="104"/>
        <end position="130"/>
    </location>
</feature>
<protein>
    <recommendedName>
        <fullName evidence="1">Disulfide bond formation protein B</fullName>
    </recommendedName>
    <alternativeName>
        <fullName evidence="1">Disulfide oxidoreductase</fullName>
    </alternativeName>
</protein>
<accession>A1RKH3</accession>
<dbReference type="EMBL" id="CP000503">
    <property type="protein sequence ID" value="ABM25168.1"/>
    <property type="status" value="ALT_INIT"/>
    <property type="molecule type" value="Genomic_DNA"/>
</dbReference>
<dbReference type="RefSeq" id="WP_014610390.1">
    <property type="nucleotide sequence ID" value="NC_008750.1"/>
</dbReference>
<dbReference type="SMR" id="A1RKH3"/>
<dbReference type="GeneID" id="67443215"/>
<dbReference type="KEGG" id="shw:Sputw3181_2344"/>
<dbReference type="HOGENOM" id="CLU_098660_2_0_6"/>
<dbReference type="Proteomes" id="UP000002597">
    <property type="component" value="Chromosome"/>
</dbReference>
<dbReference type="GO" id="GO:0005886">
    <property type="term" value="C:plasma membrane"/>
    <property type="evidence" value="ECO:0007669"/>
    <property type="project" value="UniProtKB-SubCell"/>
</dbReference>
<dbReference type="GO" id="GO:0009055">
    <property type="term" value="F:electron transfer activity"/>
    <property type="evidence" value="ECO:0007669"/>
    <property type="project" value="UniProtKB-UniRule"/>
</dbReference>
<dbReference type="GO" id="GO:0015035">
    <property type="term" value="F:protein-disulfide reductase activity"/>
    <property type="evidence" value="ECO:0007669"/>
    <property type="project" value="UniProtKB-UniRule"/>
</dbReference>
<dbReference type="GO" id="GO:0006457">
    <property type="term" value="P:protein folding"/>
    <property type="evidence" value="ECO:0007669"/>
    <property type="project" value="InterPro"/>
</dbReference>
<dbReference type="Gene3D" id="1.20.1550.10">
    <property type="entry name" value="DsbB-like"/>
    <property type="match status" value="1"/>
</dbReference>
<dbReference type="HAMAP" id="MF_00286">
    <property type="entry name" value="DsbB"/>
    <property type="match status" value="1"/>
</dbReference>
<dbReference type="InterPro" id="IPR003752">
    <property type="entry name" value="DiS_bond_form_DsbB/BdbC"/>
</dbReference>
<dbReference type="InterPro" id="IPR022920">
    <property type="entry name" value="Disulphide_bond_form_DsbB"/>
</dbReference>
<dbReference type="InterPro" id="IPR050183">
    <property type="entry name" value="DsbB"/>
</dbReference>
<dbReference type="InterPro" id="IPR023380">
    <property type="entry name" value="DsbB-like_sf"/>
</dbReference>
<dbReference type="NCBIfam" id="NF002485">
    <property type="entry name" value="PRK01749.1"/>
    <property type="match status" value="1"/>
</dbReference>
<dbReference type="PANTHER" id="PTHR36570">
    <property type="entry name" value="DISULFIDE BOND FORMATION PROTEIN B"/>
    <property type="match status" value="1"/>
</dbReference>
<dbReference type="PANTHER" id="PTHR36570:SF2">
    <property type="entry name" value="DISULFIDE BOND FORMATION PROTEIN B"/>
    <property type="match status" value="1"/>
</dbReference>
<dbReference type="Pfam" id="PF02600">
    <property type="entry name" value="DsbB"/>
    <property type="match status" value="1"/>
</dbReference>
<dbReference type="SUPFAM" id="SSF158442">
    <property type="entry name" value="DsbB-like"/>
    <property type="match status" value="1"/>
</dbReference>
<name>DSBB_SHESW</name>
<proteinExistence type="inferred from homology"/>
<reference key="1">
    <citation type="submission" date="2006-12" db="EMBL/GenBank/DDBJ databases">
        <title>Complete sequence of Shewanella sp. W3-18-1.</title>
        <authorList>
            <consortium name="US DOE Joint Genome Institute"/>
            <person name="Copeland A."/>
            <person name="Lucas S."/>
            <person name="Lapidus A."/>
            <person name="Barry K."/>
            <person name="Detter J.C."/>
            <person name="Glavina del Rio T."/>
            <person name="Hammon N."/>
            <person name="Israni S."/>
            <person name="Dalin E."/>
            <person name="Tice H."/>
            <person name="Pitluck S."/>
            <person name="Chain P."/>
            <person name="Malfatti S."/>
            <person name="Shin M."/>
            <person name="Vergez L."/>
            <person name="Schmutz J."/>
            <person name="Larimer F."/>
            <person name="Land M."/>
            <person name="Hauser L."/>
            <person name="Kyrpides N."/>
            <person name="Lykidis A."/>
            <person name="Tiedje J."/>
            <person name="Richardson P."/>
        </authorList>
    </citation>
    <scope>NUCLEOTIDE SEQUENCE [LARGE SCALE GENOMIC DNA]</scope>
    <source>
        <strain>W3-18-1</strain>
    </source>
</reference>
<comment type="function">
    <text evidence="1">Required for disulfide bond formation in some periplasmic proteins. Acts by oxidizing the DsbA protein.</text>
</comment>
<comment type="subcellular location">
    <subcellularLocation>
        <location evidence="1">Cell inner membrane</location>
        <topology evidence="1">Multi-pass membrane protein</topology>
    </subcellularLocation>
</comment>
<comment type="similarity">
    <text evidence="1">Belongs to the DsbB family.</text>
</comment>
<comment type="sequence caution" evidence="2">
    <conflict type="erroneous initiation">
        <sequence resource="EMBL-CDS" id="ABM25168"/>
    </conflict>
</comment>
<organism>
    <name type="scientific">Shewanella sp. (strain W3-18-1)</name>
    <dbReference type="NCBI Taxonomy" id="351745"/>
    <lineage>
        <taxon>Bacteria</taxon>
        <taxon>Pseudomonadati</taxon>
        <taxon>Pseudomonadota</taxon>
        <taxon>Gammaproteobacteria</taxon>
        <taxon>Alteromonadales</taxon>
        <taxon>Shewanellaceae</taxon>
        <taxon>Shewanella</taxon>
    </lineage>
</organism>